<protein>
    <recommendedName>
        <fullName evidence="1">Enolase</fullName>
        <ecNumber evidence="1">4.2.1.11</ecNumber>
    </recommendedName>
    <alternativeName>
        <fullName evidence="1">2-phospho-D-glycerate hydro-lyase</fullName>
    </alternativeName>
    <alternativeName>
        <fullName evidence="1">2-phosphoglycerate dehydratase</fullName>
    </alternativeName>
</protein>
<proteinExistence type="inferred from homology"/>
<evidence type="ECO:0000255" key="1">
    <source>
        <dbReference type="HAMAP-Rule" id="MF_00318"/>
    </source>
</evidence>
<dbReference type="EC" id="4.2.1.11" evidence="1"/>
<dbReference type="EMBL" id="CP000542">
    <property type="protein sequence ID" value="ABM58393.1"/>
    <property type="molecule type" value="Genomic_DNA"/>
</dbReference>
<dbReference type="RefSeq" id="WP_011810392.1">
    <property type="nucleotide sequence ID" value="NC_008786.1"/>
</dbReference>
<dbReference type="SMR" id="A1WL86"/>
<dbReference type="STRING" id="391735.Veis_2650"/>
<dbReference type="GeneID" id="76461161"/>
<dbReference type="KEGG" id="vei:Veis_2650"/>
<dbReference type="eggNOG" id="COG0148">
    <property type="taxonomic scope" value="Bacteria"/>
</dbReference>
<dbReference type="HOGENOM" id="CLU_031223_2_1_4"/>
<dbReference type="OrthoDB" id="9804716at2"/>
<dbReference type="UniPathway" id="UPA00109">
    <property type="reaction ID" value="UER00187"/>
</dbReference>
<dbReference type="Proteomes" id="UP000000374">
    <property type="component" value="Chromosome"/>
</dbReference>
<dbReference type="GO" id="GO:0009986">
    <property type="term" value="C:cell surface"/>
    <property type="evidence" value="ECO:0007669"/>
    <property type="project" value="UniProtKB-SubCell"/>
</dbReference>
<dbReference type="GO" id="GO:0005576">
    <property type="term" value="C:extracellular region"/>
    <property type="evidence" value="ECO:0007669"/>
    <property type="project" value="UniProtKB-SubCell"/>
</dbReference>
<dbReference type="GO" id="GO:0000015">
    <property type="term" value="C:phosphopyruvate hydratase complex"/>
    <property type="evidence" value="ECO:0007669"/>
    <property type="project" value="InterPro"/>
</dbReference>
<dbReference type="GO" id="GO:0000287">
    <property type="term" value="F:magnesium ion binding"/>
    <property type="evidence" value="ECO:0007669"/>
    <property type="project" value="UniProtKB-UniRule"/>
</dbReference>
<dbReference type="GO" id="GO:0004634">
    <property type="term" value="F:phosphopyruvate hydratase activity"/>
    <property type="evidence" value="ECO:0007669"/>
    <property type="project" value="UniProtKB-UniRule"/>
</dbReference>
<dbReference type="GO" id="GO:0006096">
    <property type="term" value="P:glycolytic process"/>
    <property type="evidence" value="ECO:0007669"/>
    <property type="project" value="UniProtKB-UniRule"/>
</dbReference>
<dbReference type="CDD" id="cd03313">
    <property type="entry name" value="enolase"/>
    <property type="match status" value="1"/>
</dbReference>
<dbReference type="FunFam" id="3.20.20.120:FF:000001">
    <property type="entry name" value="Enolase"/>
    <property type="match status" value="1"/>
</dbReference>
<dbReference type="FunFam" id="3.30.390.10:FF:000001">
    <property type="entry name" value="Enolase"/>
    <property type="match status" value="1"/>
</dbReference>
<dbReference type="Gene3D" id="3.20.20.120">
    <property type="entry name" value="Enolase-like C-terminal domain"/>
    <property type="match status" value="1"/>
</dbReference>
<dbReference type="Gene3D" id="3.30.390.10">
    <property type="entry name" value="Enolase-like, N-terminal domain"/>
    <property type="match status" value="1"/>
</dbReference>
<dbReference type="HAMAP" id="MF_00318">
    <property type="entry name" value="Enolase"/>
    <property type="match status" value="1"/>
</dbReference>
<dbReference type="InterPro" id="IPR000941">
    <property type="entry name" value="Enolase"/>
</dbReference>
<dbReference type="InterPro" id="IPR036849">
    <property type="entry name" value="Enolase-like_C_sf"/>
</dbReference>
<dbReference type="InterPro" id="IPR029017">
    <property type="entry name" value="Enolase-like_N"/>
</dbReference>
<dbReference type="InterPro" id="IPR020810">
    <property type="entry name" value="Enolase_C"/>
</dbReference>
<dbReference type="InterPro" id="IPR020809">
    <property type="entry name" value="Enolase_CS"/>
</dbReference>
<dbReference type="InterPro" id="IPR020811">
    <property type="entry name" value="Enolase_N"/>
</dbReference>
<dbReference type="NCBIfam" id="TIGR01060">
    <property type="entry name" value="eno"/>
    <property type="match status" value="1"/>
</dbReference>
<dbReference type="PANTHER" id="PTHR11902">
    <property type="entry name" value="ENOLASE"/>
    <property type="match status" value="1"/>
</dbReference>
<dbReference type="PANTHER" id="PTHR11902:SF1">
    <property type="entry name" value="ENOLASE"/>
    <property type="match status" value="1"/>
</dbReference>
<dbReference type="Pfam" id="PF00113">
    <property type="entry name" value="Enolase_C"/>
    <property type="match status" value="1"/>
</dbReference>
<dbReference type="Pfam" id="PF03952">
    <property type="entry name" value="Enolase_N"/>
    <property type="match status" value="1"/>
</dbReference>
<dbReference type="PIRSF" id="PIRSF001400">
    <property type="entry name" value="Enolase"/>
    <property type="match status" value="1"/>
</dbReference>
<dbReference type="PRINTS" id="PR00148">
    <property type="entry name" value="ENOLASE"/>
</dbReference>
<dbReference type="SFLD" id="SFLDF00002">
    <property type="entry name" value="enolase"/>
    <property type="match status" value="1"/>
</dbReference>
<dbReference type="SFLD" id="SFLDG00178">
    <property type="entry name" value="enolase"/>
    <property type="match status" value="1"/>
</dbReference>
<dbReference type="SMART" id="SM01192">
    <property type="entry name" value="Enolase_C"/>
    <property type="match status" value="1"/>
</dbReference>
<dbReference type="SMART" id="SM01193">
    <property type="entry name" value="Enolase_N"/>
    <property type="match status" value="1"/>
</dbReference>
<dbReference type="SUPFAM" id="SSF51604">
    <property type="entry name" value="Enolase C-terminal domain-like"/>
    <property type="match status" value="1"/>
</dbReference>
<dbReference type="SUPFAM" id="SSF54826">
    <property type="entry name" value="Enolase N-terminal domain-like"/>
    <property type="match status" value="1"/>
</dbReference>
<dbReference type="PROSITE" id="PS00164">
    <property type="entry name" value="ENOLASE"/>
    <property type="match status" value="1"/>
</dbReference>
<feature type="chain" id="PRO_1000019259" description="Enolase">
    <location>
        <begin position="1"/>
        <end position="428"/>
    </location>
</feature>
<feature type="active site" description="Proton donor" evidence="1">
    <location>
        <position position="205"/>
    </location>
</feature>
<feature type="active site" description="Proton acceptor" evidence="1">
    <location>
        <position position="338"/>
    </location>
</feature>
<feature type="binding site" evidence="1">
    <location>
        <position position="163"/>
    </location>
    <ligand>
        <name>(2R)-2-phosphoglycerate</name>
        <dbReference type="ChEBI" id="CHEBI:58289"/>
    </ligand>
</feature>
<feature type="binding site" evidence="1">
    <location>
        <position position="242"/>
    </location>
    <ligand>
        <name>Mg(2+)</name>
        <dbReference type="ChEBI" id="CHEBI:18420"/>
    </ligand>
</feature>
<feature type="binding site" evidence="1">
    <location>
        <position position="286"/>
    </location>
    <ligand>
        <name>Mg(2+)</name>
        <dbReference type="ChEBI" id="CHEBI:18420"/>
    </ligand>
</feature>
<feature type="binding site" evidence="1">
    <location>
        <position position="313"/>
    </location>
    <ligand>
        <name>Mg(2+)</name>
        <dbReference type="ChEBI" id="CHEBI:18420"/>
    </ligand>
</feature>
<feature type="binding site" evidence="1">
    <location>
        <position position="338"/>
    </location>
    <ligand>
        <name>(2R)-2-phosphoglycerate</name>
        <dbReference type="ChEBI" id="CHEBI:58289"/>
    </ligand>
</feature>
<feature type="binding site" evidence="1">
    <location>
        <position position="367"/>
    </location>
    <ligand>
        <name>(2R)-2-phosphoglycerate</name>
        <dbReference type="ChEBI" id="CHEBI:58289"/>
    </ligand>
</feature>
<feature type="binding site" evidence="1">
    <location>
        <position position="368"/>
    </location>
    <ligand>
        <name>(2R)-2-phosphoglycerate</name>
        <dbReference type="ChEBI" id="CHEBI:58289"/>
    </ligand>
</feature>
<feature type="binding site" evidence="1">
    <location>
        <position position="389"/>
    </location>
    <ligand>
        <name>(2R)-2-phosphoglycerate</name>
        <dbReference type="ChEBI" id="CHEBI:58289"/>
    </ligand>
</feature>
<organism>
    <name type="scientific">Verminephrobacter eiseniae (strain EF01-2)</name>
    <dbReference type="NCBI Taxonomy" id="391735"/>
    <lineage>
        <taxon>Bacteria</taxon>
        <taxon>Pseudomonadati</taxon>
        <taxon>Pseudomonadota</taxon>
        <taxon>Betaproteobacteria</taxon>
        <taxon>Burkholderiales</taxon>
        <taxon>Comamonadaceae</taxon>
        <taxon>Verminephrobacter</taxon>
    </lineage>
</organism>
<sequence>MSAIVDIVGREVLDSRGNPTVECDVLLESGVMGRAAVPSGASTGSREAIEMRDGDPRRYQGKGVLKAVEHVNTEISEAVLGLDASEQAFLDKTLIDLDGTENKSRLGANAMLAVSMAVARAAAEESGLPLYRYLGGMGSVQLPVPMMNVINGGAHANNSLDLQEFMIIPVGAPNFREALRWGAEVFHALKKIIHDLGMSTAVGDEGGFAPSVENHEAAIRLILQAITAAGYSAGEQIALGLDCAASEFYQDGLYVLHGEGGLKLSAPQWIDMLAAWVDKYPIISIEDGMHEGDQDGWKQLSERLRDKVQLVGDDLFVTNTRLLQQGIDQRIANSILIKINQIGTLTETFAAIEMAKRAGYTAVISHRSGETEDCTIADIAVGTNAGQIKTGSLSRSDRIAKYNQLLRIEEDLGEVAQYPGRAAFRHLR</sequence>
<name>ENO_VEREI</name>
<accession>A1WL86</accession>
<keyword id="KW-0963">Cytoplasm</keyword>
<keyword id="KW-0324">Glycolysis</keyword>
<keyword id="KW-0456">Lyase</keyword>
<keyword id="KW-0460">Magnesium</keyword>
<keyword id="KW-0479">Metal-binding</keyword>
<keyword id="KW-1185">Reference proteome</keyword>
<keyword id="KW-0964">Secreted</keyword>
<comment type="function">
    <text evidence="1">Catalyzes the reversible conversion of 2-phosphoglycerate (2-PG) into phosphoenolpyruvate (PEP). It is essential for the degradation of carbohydrates via glycolysis.</text>
</comment>
<comment type="catalytic activity">
    <reaction evidence="1">
        <text>(2R)-2-phosphoglycerate = phosphoenolpyruvate + H2O</text>
        <dbReference type="Rhea" id="RHEA:10164"/>
        <dbReference type="ChEBI" id="CHEBI:15377"/>
        <dbReference type="ChEBI" id="CHEBI:58289"/>
        <dbReference type="ChEBI" id="CHEBI:58702"/>
        <dbReference type="EC" id="4.2.1.11"/>
    </reaction>
</comment>
<comment type="cofactor">
    <cofactor evidence="1">
        <name>Mg(2+)</name>
        <dbReference type="ChEBI" id="CHEBI:18420"/>
    </cofactor>
    <text evidence="1">Binds a second Mg(2+) ion via substrate during catalysis.</text>
</comment>
<comment type="pathway">
    <text evidence="1">Carbohydrate degradation; glycolysis; pyruvate from D-glyceraldehyde 3-phosphate: step 4/5.</text>
</comment>
<comment type="subcellular location">
    <subcellularLocation>
        <location evidence="1">Cytoplasm</location>
    </subcellularLocation>
    <subcellularLocation>
        <location evidence="1">Secreted</location>
    </subcellularLocation>
    <subcellularLocation>
        <location evidence="1">Cell surface</location>
    </subcellularLocation>
    <text evidence="1">Fractions of enolase are present in both the cytoplasm and on the cell surface.</text>
</comment>
<comment type="similarity">
    <text evidence="1">Belongs to the enolase family.</text>
</comment>
<gene>
    <name evidence="1" type="primary">eno</name>
    <name type="ordered locus">Veis_2650</name>
</gene>
<reference key="1">
    <citation type="submission" date="2006-12" db="EMBL/GenBank/DDBJ databases">
        <title>Complete sequence of chromosome 1 of Verminephrobacter eiseniae EF01-2.</title>
        <authorList>
            <person name="Copeland A."/>
            <person name="Lucas S."/>
            <person name="Lapidus A."/>
            <person name="Barry K."/>
            <person name="Detter J.C."/>
            <person name="Glavina del Rio T."/>
            <person name="Dalin E."/>
            <person name="Tice H."/>
            <person name="Pitluck S."/>
            <person name="Chertkov O."/>
            <person name="Brettin T."/>
            <person name="Bruce D."/>
            <person name="Han C."/>
            <person name="Tapia R."/>
            <person name="Gilna P."/>
            <person name="Schmutz J."/>
            <person name="Larimer F."/>
            <person name="Land M."/>
            <person name="Hauser L."/>
            <person name="Kyrpides N."/>
            <person name="Kim E."/>
            <person name="Stahl D."/>
            <person name="Richardson P."/>
        </authorList>
    </citation>
    <scope>NUCLEOTIDE SEQUENCE [LARGE SCALE GENOMIC DNA]</scope>
    <source>
        <strain>EF01-2</strain>
    </source>
</reference>